<gene>
    <name evidence="1" type="primary">coaD</name>
    <name type="ordered locus">Lm4b_02073</name>
</gene>
<evidence type="ECO:0000255" key="1">
    <source>
        <dbReference type="HAMAP-Rule" id="MF_00151"/>
    </source>
</evidence>
<proteinExistence type="inferred from homology"/>
<accession>C1KX05</accession>
<dbReference type="EC" id="2.7.7.3" evidence="1"/>
<dbReference type="EMBL" id="FM242711">
    <property type="protein sequence ID" value="CAS05832.1"/>
    <property type="molecule type" value="Genomic_DNA"/>
</dbReference>
<dbReference type="RefSeq" id="WP_003728323.1">
    <property type="nucleotide sequence ID" value="NC_012488.1"/>
</dbReference>
<dbReference type="SMR" id="C1KX05"/>
<dbReference type="KEGG" id="lmc:Lm4b_02073"/>
<dbReference type="HOGENOM" id="CLU_100149_0_1_9"/>
<dbReference type="UniPathway" id="UPA00241">
    <property type="reaction ID" value="UER00355"/>
</dbReference>
<dbReference type="GO" id="GO:0005737">
    <property type="term" value="C:cytoplasm"/>
    <property type="evidence" value="ECO:0007669"/>
    <property type="project" value="UniProtKB-SubCell"/>
</dbReference>
<dbReference type="GO" id="GO:0005524">
    <property type="term" value="F:ATP binding"/>
    <property type="evidence" value="ECO:0007669"/>
    <property type="project" value="UniProtKB-KW"/>
</dbReference>
<dbReference type="GO" id="GO:0004595">
    <property type="term" value="F:pantetheine-phosphate adenylyltransferase activity"/>
    <property type="evidence" value="ECO:0007669"/>
    <property type="project" value="UniProtKB-UniRule"/>
</dbReference>
<dbReference type="GO" id="GO:0015937">
    <property type="term" value="P:coenzyme A biosynthetic process"/>
    <property type="evidence" value="ECO:0007669"/>
    <property type="project" value="UniProtKB-UniRule"/>
</dbReference>
<dbReference type="CDD" id="cd02163">
    <property type="entry name" value="PPAT"/>
    <property type="match status" value="1"/>
</dbReference>
<dbReference type="FunFam" id="3.40.50.620:FF:000012">
    <property type="entry name" value="Phosphopantetheine adenylyltransferase"/>
    <property type="match status" value="1"/>
</dbReference>
<dbReference type="Gene3D" id="3.40.50.620">
    <property type="entry name" value="HUPs"/>
    <property type="match status" value="1"/>
</dbReference>
<dbReference type="HAMAP" id="MF_00151">
    <property type="entry name" value="PPAT_bact"/>
    <property type="match status" value="1"/>
</dbReference>
<dbReference type="InterPro" id="IPR004821">
    <property type="entry name" value="Cyt_trans-like"/>
</dbReference>
<dbReference type="InterPro" id="IPR001980">
    <property type="entry name" value="PPAT"/>
</dbReference>
<dbReference type="InterPro" id="IPR014729">
    <property type="entry name" value="Rossmann-like_a/b/a_fold"/>
</dbReference>
<dbReference type="NCBIfam" id="TIGR01510">
    <property type="entry name" value="coaD_prev_kdtB"/>
    <property type="match status" value="1"/>
</dbReference>
<dbReference type="NCBIfam" id="TIGR00125">
    <property type="entry name" value="cyt_tran_rel"/>
    <property type="match status" value="1"/>
</dbReference>
<dbReference type="PANTHER" id="PTHR21342">
    <property type="entry name" value="PHOSPHOPANTETHEINE ADENYLYLTRANSFERASE"/>
    <property type="match status" value="1"/>
</dbReference>
<dbReference type="PANTHER" id="PTHR21342:SF1">
    <property type="entry name" value="PHOSPHOPANTETHEINE ADENYLYLTRANSFERASE"/>
    <property type="match status" value="1"/>
</dbReference>
<dbReference type="Pfam" id="PF01467">
    <property type="entry name" value="CTP_transf_like"/>
    <property type="match status" value="1"/>
</dbReference>
<dbReference type="PRINTS" id="PR01020">
    <property type="entry name" value="LPSBIOSNTHSS"/>
</dbReference>
<dbReference type="SUPFAM" id="SSF52374">
    <property type="entry name" value="Nucleotidylyl transferase"/>
    <property type="match status" value="1"/>
</dbReference>
<protein>
    <recommendedName>
        <fullName evidence="1">Phosphopantetheine adenylyltransferase</fullName>
        <ecNumber evidence="1">2.7.7.3</ecNumber>
    </recommendedName>
    <alternativeName>
        <fullName evidence="1">Dephospho-CoA pyrophosphorylase</fullName>
    </alternativeName>
    <alternativeName>
        <fullName evidence="1">Pantetheine-phosphate adenylyltransferase</fullName>
        <shortName evidence="1">PPAT</shortName>
    </alternativeName>
</protein>
<sequence length="160" mass="17856">MGDKIAVIPGTFDPITNGHLDIIERAAKIFDVLYVSVLNNSSKKPLFTIEERMEMIRQVTAHLPNVQVESASGLTVDYAATRGATAIVRGLRAVSDFEYEMQIASMNRTLNAEIETFFIMTNTKYSFLSSSMVKEVAQYQGDISELVPEIVNEQVQAKFK</sequence>
<reference key="1">
    <citation type="journal article" date="2012" name="BMC Genomics">
        <title>Comparative genomics and transcriptomics of lineages I, II, and III strains of Listeria monocytogenes.</title>
        <authorList>
            <person name="Hain T."/>
            <person name="Ghai R."/>
            <person name="Billion A."/>
            <person name="Kuenne C.T."/>
            <person name="Steinweg C."/>
            <person name="Izar B."/>
            <person name="Mohamed W."/>
            <person name="Mraheil M."/>
            <person name="Domann E."/>
            <person name="Schaffrath S."/>
            <person name="Karst U."/>
            <person name="Goesmann A."/>
            <person name="Oehm S."/>
            <person name="Puhler A."/>
            <person name="Merkl R."/>
            <person name="Vorwerk S."/>
            <person name="Glaser P."/>
            <person name="Garrido P."/>
            <person name="Rusniok C."/>
            <person name="Buchrieser C."/>
            <person name="Goebel W."/>
            <person name="Chakraborty T."/>
        </authorList>
    </citation>
    <scope>NUCLEOTIDE SEQUENCE [LARGE SCALE GENOMIC DNA]</scope>
    <source>
        <strain>CLIP80459</strain>
    </source>
</reference>
<feature type="chain" id="PRO_1000203427" description="Phosphopantetheine adenylyltransferase">
    <location>
        <begin position="1"/>
        <end position="160"/>
    </location>
</feature>
<feature type="binding site" evidence="1">
    <location>
        <begin position="11"/>
        <end position="12"/>
    </location>
    <ligand>
        <name>ATP</name>
        <dbReference type="ChEBI" id="CHEBI:30616"/>
    </ligand>
</feature>
<feature type="binding site" evidence="1">
    <location>
        <position position="11"/>
    </location>
    <ligand>
        <name>substrate</name>
    </ligand>
</feature>
<feature type="binding site" evidence="1">
    <location>
        <position position="19"/>
    </location>
    <ligand>
        <name>ATP</name>
        <dbReference type="ChEBI" id="CHEBI:30616"/>
    </ligand>
</feature>
<feature type="binding site" evidence="1">
    <location>
        <position position="43"/>
    </location>
    <ligand>
        <name>substrate</name>
    </ligand>
</feature>
<feature type="binding site" evidence="1">
    <location>
        <position position="75"/>
    </location>
    <ligand>
        <name>substrate</name>
    </ligand>
</feature>
<feature type="binding site" evidence="1">
    <location>
        <position position="89"/>
    </location>
    <ligand>
        <name>substrate</name>
    </ligand>
</feature>
<feature type="binding site" evidence="1">
    <location>
        <begin position="90"/>
        <end position="92"/>
    </location>
    <ligand>
        <name>ATP</name>
        <dbReference type="ChEBI" id="CHEBI:30616"/>
    </ligand>
</feature>
<feature type="binding site" evidence="1">
    <location>
        <position position="100"/>
    </location>
    <ligand>
        <name>ATP</name>
        <dbReference type="ChEBI" id="CHEBI:30616"/>
    </ligand>
</feature>
<feature type="binding site" evidence="1">
    <location>
        <begin position="125"/>
        <end position="131"/>
    </location>
    <ligand>
        <name>ATP</name>
        <dbReference type="ChEBI" id="CHEBI:30616"/>
    </ligand>
</feature>
<feature type="site" description="Transition state stabilizer" evidence="1">
    <location>
        <position position="19"/>
    </location>
</feature>
<organism>
    <name type="scientific">Listeria monocytogenes serotype 4b (strain CLIP80459)</name>
    <dbReference type="NCBI Taxonomy" id="568819"/>
    <lineage>
        <taxon>Bacteria</taxon>
        <taxon>Bacillati</taxon>
        <taxon>Bacillota</taxon>
        <taxon>Bacilli</taxon>
        <taxon>Bacillales</taxon>
        <taxon>Listeriaceae</taxon>
        <taxon>Listeria</taxon>
    </lineage>
</organism>
<comment type="function">
    <text evidence="1">Reversibly transfers an adenylyl group from ATP to 4'-phosphopantetheine, yielding dephospho-CoA (dPCoA) and pyrophosphate.</text>
</comment>
<comment type="catalytic activity">
    <reaction evidence="1">
        <text>(R)-4'-phosphopantetheine + ATP + H(+) = 3'-dephospho-CoA + diphosphate</text>
        <dbReference type="Rhea" id="RHEA:19801"/>
        <dbReference type="ChEBI" id="CHEBI:15378"/>
        <dbReference type="ChEBI" id="CHEBI:30616"/>
        <dbReference type="ChEBI" id="CHEBI:33019"/>
        <dbReference type="ChEBI" id="CHEBI:57328"/>
        <dbReference type="ChEBI" id="CHEBI:61723"/>
        <dbReference type="EC" id="2.7.7.3"/>
    </reaction>
</comment>
<comment type="cofactor">
    <cofactor evidence="1">
        <name>Mg(2+)</name>
        <dbReference type="ChEBI" id="CHEBI:18420"/>
    </cofactor>
</comment>
<comment type="pathway">
    <text evidence="1">Cofactor biosynthesis; coenzyme A biosynthesis; CoA from (R)-pantothenate: step 4/5.</text>
</comment>
<comment type="subunit">
    <text evidence="1">Homohexamer.</text>
</comment>
<comment type="subcellular location">
    <subcellularLocation>
        <location evidence="1">Cytoplasm</location>
    </subcellularLocation>
</comment>
<comment type="similarity">
    <text evidence="1">Belongs to the bacterial CoaD family.</text>
</comment>
<keyword id="KW-0067">ATP-binding</keyword>
<keyword id="KW-0173">Coenzyme A biosynthesis</keyword>
<keyword id="KW-0963">Cytoplasm</keyword>
<keyword id="KW-0460">Magnesium</keyword>
<keyword id="KW-0547">Nucleotide-binding</keyword>
<keyword id="KW-0548">Nucleotidyltransferase</keyword>
<keyword id="KW-0808">Transferase</keyword>
<name>COAD_LISMC</name>